<keyword id="KW-0150">Chloroplast</keyword>
<keyword id="KW-0472">Membrane</keyword>
<keyword id="KW-0520">NAD</keyword>
<keyword id="KW-0521">NADP</keyword>
<keyword id="KW-0934">Plastid</keyword>
<keyword id="KW-0618">Plastoquinone</keyword>
<keyword id="KW-0874">Quinone</keyword>
<keyword id="KW-0793">Thylakoid</keyword>
<keyword id="KW-1278">Translocase</keyword>
<keyword id="KW-0812">Transmembrane</keyword>
<keyword id="KW-1133">Transmembrane helix</keyword>
<keyword id="KW-0813">Transport</keyword>
<geneLocation type="chloroplast"/>
<organism>
    <name type="scientific">Lobularia maritima</name>
    <name type="common">Sweet alyssum</name>
    <name type="synonym">Alyssum maritimum</name>
    <dbReference type="NCBI Taxonomy" id="226051"/>
    <lineage>
        <taxon>Eukaryota</taxon>
        <taxon>Viridiplantae</taxon>
        <taxon>Streptophyta</taxon>
        <taxon>Embryophyta</taxon>
        <taxon>Tracheophyta</taxon>
        <taxon>Spermatophyta</taxon>
        <taxon>Magnoliopsida</taxon>
        <taxon>eudicotyledons</taxon>
        <taxon>Gunneridae</taxon>
        <taxon>Pentapetalae</taxon>
        <taxon>rosids</taxon>
        <taxon>malvids</taxon>
        <taxon>Brassicales</taxon>
        <taxon>Brassicaceae</taxon>
        <taxon>Anastaticeae</taxon>
        <taxon>Lobularia</taxon>
    </lineage>
</organism>
<reference key="1">
    <citation type="submission" date="2007-03" db="EMBL/GenBank/DDBJ databases">
        <title>Sequencing analysis of Lobularia maritima chloroplast DNA.</title>
        <authorList>
            <person name="Hosouchi T."/>
            <person name="Tsuruoka H."/>
            <person name="Kotani H."/>
        </authorList>
    </citation>
    <scope>NUCLEOTIDE SEQUENCE [LARGE SCALE GENOMIC DNA]</scope>
</reference>
<sequence>MEHTYQYSWIIPFIPLPVPILLGVGLLLFPTATKNLRRMWTFLSIFLLSIVMIFSLYLSIQQIFLSCIHQNVWSWTINNEFSFEFGYFIDPLTSIMLILITTVGILVLIYSDNYMSHDQGYLRFFAYMGFFNTSMLGLVTSSNLIQVYFFWELVGMCSYLLIGFWFTRPIAANACQKAFVTNRVGDFGLLLGILGLYWITGSFEFQDLFEIFNNLILTNRVNLLFFTLCAFLLFVGPIAKSAQFPLHVWLPDAMEGPTPISALIHAATMVAAGIFLVARLLPIFIVIPSIMYIISLIGIITVLLGATLALAQKDIKRGLAYSTMSQLGYMMLALGMGSYRAALFHLITHAYSKALLFLGSGSIIHSMEAIVGYSPDKSQNMILMGGLTKHVPITKTAFLVGTLSLCGIPPLACFWSKDEILNDSFLFSPIFAIIACSTAGLTAFYMFRIYLLTFEGHLNTYFLNYSGKKSSSFYSISLWGKEEEKNLNKNFGLVPLLITNNTKRASVFCKKTYKISNNVRNQTFITVENFGLNTRTFYYPQESDNTILFPMLLLLLFTLFVGAIGIPFNQEGIDFDILSKLFMPSINLLHKNAQNFVDWYEFFRNATFSVSIALFGIFIAYCLYKPFYSSLLNLTVLNSFQTWSSKRIRWEKLINFVYNWSYNRGYIDAFFKTSLTESIIRLAKQTNFFDKRIIDGITNGVGITSFFVGEVTKYIGGSRISSYLFLYLSYVLIFLTILFFFYFEKF</sequence>
<protein>
    <recommendedName>
        <fullName>NAD(P)H-quinone oxidoreductase subunit 5, chloroplastic</fullName>
        <ecNumber>7.1.1.-</ecNumber>
    </recommendedName>
    <alternativeName>
        <fullName>NAD(P)H dehydrogenase subunit 5</fullName>
    </alternativeName>
    <alternativeName>
        <fullName>NADH-plastoquinone oxidoreductase subunit 5</fullName>
    </alternativeName>
</protein>
<evidence type="ECO:0000250" key="1"/>
<evidence type="ECO:0000255" key="2"/>
<evidence type="ECO:0000305" key="3"/>
<dbReference type="EC" id="7.1.1.-"/>
<dbReference type="EMBL" id="AP009375">
    <property type="protein sequence ID" value="BAF50599.1"/>
    <property type="molecule type" value="Genomic_DNA"/>
</dbReference>
<dbReference type="RefSeq" id="YP_001123774.1">
    <property type="nucleotide sequence ID" value="NC_009274.1"/>
</dbReference>
<dbReference type="SMR" id="A4QLP4"/>
<dbReference type="GeneID" id="4964916"/>
<dbReference type="GO" id="GO:0009535">
    <property type="term" value="C:chloroplast thylakoid membrane"/>
    <property type="evidence" value="ECO:0007669"/>
    <property type="project" value="UniProtKB-SubCell"/>
</dbReference>
<dbReference type="GO" id="GO:0008137">
    <property type="term" value="F:NADH dehydrogenase (ubiquinone) activity"/>
    <property type="evidence" value="ECO:0007669"/>
    <property type="project" value="InterPro"/>
</dbReference>
<dbReference type="GO" id="GO:0048038">
    <property type="term" value="F:quinone binding"/>
    <property type="evidence" value="ECO:0007669"/>
    <property type="project" value="UniProtKB-KW"/>
</dbReference>
<dbReference type="GO" id="GO:0042773">
    <property type="term" value="P:ATP synthesis coupled electron transport"/>
    <property type="evidence" value="ECO:0007669"/>
    <property type="project" value="InterPro"/>
</dbReference>
<dbReference type="GO" id="GO:0015990">
    <property type="term" value="P:electron transport coupled proton transport"/>
    <property type="evidence" value="ECO:0007669"/>
    <property type="project" value="TreeGrafter"/>
</dbReference>
<dbReference type="Gene3D" id="1.20.5.2700">
    <property type="match status" value="1"/>
</dbReference>
<dbReference type="InterPro" id="IPR002128">
    <property type="entry name" value="NADH_UbQ_OxRdtase_chlpt_su5_C"/>
</dbReference>
<dbReference type="InterPro" id="IPR018393">
    <property type="entry name" value="NADHpl_OxRdtase_5_subgr"/>
</dbReference>
<dbReference type="InterPro" id="IPR001750">
    <property type="entry name" value="ND/Mrp_TM"/>
</dbReference>
<dbReference type="InterPro" id="IPR003945">
    <property type="entry name" value="NU5C-like"/>
</dbReference>
<dbReference type="InterPro" id="IPR001516">
    <property type="entry name" value="Proton_antipo_N"/>
</dbReference>
<dbReference type="NCBIfam" id="TIGR01974">
    <property type="entry name" value="NDH_I_L"/>
    <property type="match status" value="1"/>
</dbReference>
<dbReference type="NCBIfam" id="NF005141">
    <property type="entry name" value="PRK06590.1"/>
    <property type="match status" value="1"/>
</dbReference>
<dbReference type="PANTHER" id="PTHR42829">
    <property type="entry name" value="NADH-UBIQUINONE OXIDOREDUCTASE CHAIN 5"/>
    <property type="match status" value="1"/>
</dbReference>
<dbReference type="PANTHER" id="PTHR42829:SF2">
    <property type="entry name" value="NADH-UBIQUINONE OXIDOREDUCTASE CHAIN 5"/>
    <property type="match status" value="1"/>
</dbReference>
<dbReference type="Pfam" id="PF01010">
    <property type="entry name" value="Proton_antipo_C"/>
    <property type="match status" value="1"/>
</dbReference>
<dbReference type="Pfam" id="PF00361">
    <property type="entry name" value="Proton_antipo_M"/>
    <property type="match status" value="1"/>
</dbReference>
<dbReference type="Pfam" id="PF00662">
    <property type="entry name" value="Proton_antipo_N"/>
    <property type="match status" value="1"/>
</dbReference>
<dbReference type="PRINTS" id="PR01434">
    <property type="entry name" value="NADHDHGNASE5"/>
</dbReference>
<dbReference type="PRINTS" id="PR01435">
    <property type="entry name" value="NPOXDRDTASE5"/>
</dbReference>
<comment type="function">
    <text evidence="1">NDH shuttles electrons from NAD(P)H:plastoquinone, via FMN and iron-sulfur (Fe-S) centers, to quinones in the photosynthetic chain and possibly in a chloroplast respiratory chain. The immediate electron acceptor for the enzyme in this species is believed to be plastoquinone. Couples the redox reaction to proton translocation, and thus conserves the redox energy in a proton gradient (By similarity).</text>
</comment>
<comment type="catalytic activity">
    <reaction>
        <text>a plastoquinone + NADH + (n+1) H(+)(in) = a plastoquinol + NAD(+) + n H(+)(out)</text>
        <dbReference type="Rhea" id="RHEA:42608"/>
        <dbReference type="Rhea" id="RHEA-COMP:9561"/>
        <dbReference type="Rhea" id="RHEA-COMP:9562"/>
        <dbReference type="ChEBI" id="CHEBI:15378"/>
        <dbReference type="ChEBI" id="CHEBI:17757"/>
        <dbReference type="ChEBI" id="CHEBI:57540"/>
        <dbReference type="ChEBI" id="CHEBI:57945"/>
        <dbReference type="ChEBI" id="CHEBI:62192"/>
    </reaction>
</comment>
<comment type="catalytic activity">
    <reaction>
        <text>a plastoquinone + NADPH + (n+1) H(+)(in) = a plastoquinol + NADP(+) + n H(+)(out)</text>
        <dbReference type="Rhea" id="RHEA:42612"/>
        <dbReference type="Rhea" id="RHEA-COMP:9561"/>
        <dbReference type="Rhea" id="RHEA-COMP:9562"/>
        <dbReference type="ChEBI" id="CHEBI:15378"/>
        <dbReference type="ChEBI" id="CHEBI:17757"/>
        <dbReference type="ChEBI" id="CHEBI:57783"/>
        <dbReference type="ChEBI" id="CHEBI:58349"/>
        <dbReference type="ChEBI" id="CHEBI:62192"/>
    </reaction>
</comment>
<comment type="subunit">
    <text evidence="1">NDH is composed of at least 16 different subunits, 5 of which are encoded in the nucleus.</text>
</comment>
<comment type="subcellular location">
    <subcellularLocation>
        <location evidence="1">Plastid</location>
        <location evidence="1">Chloroplast thylakoid membrane</location>
        <topology evidence="1">Multi-pass membrane protein</topology>
    </subcellularLocation>
</comment>
<comment type="similarity">
    <text evidence="3">Belongs to the complex I subunit 5 family.</text>
</comment>
<feature type="chain" id="PRO_0000360946" description="NAD(P)H-quinone oxidoreductase subunit 5, chloroplastic">
    <location>
        <begin position="1"/>
        <end position="746"/>
    </location>
</feature>
<feature type="transmembrane region" description="Helical" evidence="2">
    <location>
        <begin position="9"/>
        <end position="29"/>
    </location>
</feature>
<feature type="transmembrane region" description="Helical" evidence="2">
    <location>
        <begin position="40"/>
        <end position="60"/>
    </location>
</feature>
<feature type="transmembrane region" description="Helical" evidence="2">
    <location>
        <begin position="89"/>
        <end position="109"/>
    </location>
</feature>
<feature type="transmembrane region" description="Helical" evidence="2">
    <location>
        <begin position="125"/>
        <end position="145"/>
    </location>
</feature>
<feature type="transmembrane region" description="Helical" evidence="2">
    <location>
        <begin position="147"/>
        <end position="167"/>
    </location>
</feature>
<feature type="transmembrane region" description="Helical" evidence="2">
    <location>
        <begin position="185"/>
        <end position="205"/>
    </location>
</feature>
<feature type="transmembrane region" description="Helical" evidence="2">
    <location>
        <begin position="221"/>
        <end position="241"/>
    </location>
</feature>
<feature type="transmembrane region" description="Helical" evidence="2">
    <location>
        <begin position="258"/>
        <end position="278"/>
    </location>
</feature>
<feature type="transmembrane region" description="Helical" evidence="2">
    <location>
        <begin position="280"/>
        <end position="300"/>
    </location>
</feature>
<feature type="transmembrane region" description="Helical" evidence="2">
    <location>
        <begin position="327"/>
        <end position="347"/>
    </location>
</feature>
<feature type="transmembrane region" description="Helical" evidence="2">
    <location>
        <begin position="354"/>
        <end position="374"/>
    </location>
</feature>
<feature type="transmembrane region" description="Helical" evidence="2">
    <location>
        <begin position="396"/>
        <end position="416"/>
    </location>
</feature>
<feature type="transmembrane region" description="Helical" evidence="2">
    <location>
        <begin position="425"/>
        <end position="445"/>
    </location>
</feature>
<feature type="transmembrane region" description="Helical" evidence="2">
    <location>
        <begin position="547"/>
        <end position="567"/>
    </location>
</feature>
<feature type="transmembrane region" description="Helical" evidence="2">
    <location>
        <begin position="608"/>
        <end position="628"/>
    </location>
</feature>
<feature type="transmembrane region" description="Helical" evidence="2">
    <location>
        <begin position="723"/>
        <end position="743"/>
    </location>
</feature>
<proteinExistence type="inferred from homology"/>
<accession>A4QLP4</accession>
<gene>
    <name type="primary">ndhF</name>
</gene>
<name>NU5C_LOBMA</name>